<dbReference type="EC" id="2.4.2.29" evidence="1"/>
<dbReference type="EMBL" id="AE017333">
    <property type="protein sequence ID" value="AAU41765.1"/>
    <property type="molecule type" value="Genomic_DNA"/>
</dbReference>
<dbReference type="EMBL" id="CP000002">
    <property type="protein sequence ID" value="AAU24402.1"/>
    <property type="molecule type" value="Genomic_DNA"/>
</dbReference>
<dbReference type="RefSeq" id="WP_011198160.1">
    <property type="nucleotide sequence ID" value="NC_006322.1"/>
</dbReference>
<dbReference type="SMR" id="Q65GP9"/>
<dbReference type="STRING" id="279010.BL01140"/>
<dbReference type="GeneID" id="92860509"/>
<dbReference type="KEGG" id="bld:BLi02897"/>
<dbReference type="KEGG" id="bli:BL01140"/>
<dbReference type="PATRIC" id="fig|279010.13.peg.2955"/>
<dbReference type="eggNOG" id="COG0343">
    <property type="taxonomic scope" value="Bacteria"/>
</dbReference>
<dbReference type="HOGENOM" id="CLU_022060_0_1_9"/>
<dbReference type="UniPathway" id="UPA00392"/>
<dbReference type="Proteomes" id="UP000000606">
    <property type="component" value="Chromosome"/>
</dbReference>
<dbReference type="Bgee" id="BL01140">
    <property type="expression patterns" value="Expressed in testis and 3 other cell types or tissues"/>
</dbReference>
<dbReference type="GO" id="GO:0005829">
    <property type="term" value="C:cytosol"/>
    <property type="evidence" value="ECO:0007669"/>
    <property type="project" value="TreeGrafter"/>
</dbReference>
<dbReference type="GO" id="GO:0046872">
    <property type="term" value="F:metal ion binding"/>
    <property type="evidence" value="ECO:0007669"/>
    <property type="project" value="UniProtKB-KW"/>
</dbReference>
<dbReference type="GO" id="GO:0008479">
    <property type="term" value="F:tRNA-guanosine(34) queuine transglycosylase activity"/>
    <property type="evidence" value="ECO:0007669"/>
    <property type="project" value="UniProtKB-UniRule"/>
</dbReference>
<dbReference type="GO" id="GO:0008616">
    <property type="term" value="P:queuosine biosynthetic process"/>
    <property type="evidence" value="ECO:0007669"/>
    <property type="project" value="UniProtKB-UniRule"/>
</dbReference>
<dbReference type="GO" id="GO:0002099">
    <property type="term" value="P:tRNA wobble guanine modification"/>
    <property type="evidence" value="ECO:0007669"/>
    <property type="project" value="TreeGrafter"/>
</dbReference>
<dbReference type="GO" id="GO:0101030">
    <property type="term" value="P:tRNA-guanine transglycosylation"/>
    <property type="evidence" value="ECO:0007669"/>
    <property type="project" value="InterPro"/>
</dbReference>
<dbReference type="FunFam" id="3.20.20.105:FF:000001">
    <property type="entry name" value="Queuine tRNA-ribosyltransferase"/>
    <property type="match status" value="1"/>
</dbReference>
<dbReference type="Gene3D" id="3.20.20.105">
    <property type="entry name" value="Queuine tRNA-ribosyltransferase-like"/>
    <property type="match status" value="1"/>
</dbReference>
<dbReference type="HAMAP" id="MF_00168">
    <property type="entry name" value="Q_tRNA_Tgt"/>
    <property type="match status" value="1"/>
</dbReference>
<dbReference type="InterPro" id="IPR050076">
    <property type="entry name" value="ArchSynthase1/Queuine_TRR"/>
</dbReference>
<dbReference type="InterPro" id="IPR004803">
    <property type="entry name" value="TGT"/>
</dbReference>
<dbReference type="InterPro" id="IPR036511">
    <property type="entry name" value="TGT-like_sf"/>
</dbReference>
<dbReference type="InterPro" id="IPR002616">
    <property type="entry name" value="tRNA_ribo_trans-like"/>
</dbReference>
<dbReference type="NCBIfam" id="TIGR00430">
    <property type="entry name" value="Q_tRNA_tgt"/>
    <property type="match status" value="1"/>
</dbReference>
<dbReference type="NCBIfam" id="TIGR00449">
    <property type="entry name" value="tgt_general"/>
    <property type="match status" value="1"/>
</dbReference>
<dbReference type="PANTHER" id="PTHR46499">
    <property type="entry name" value="QUEUINE TRNA-RIBOSYLTRANSFERASE"/>
    <property type="match status" value="1"/>
</dbReference>
<dbReference type="PANTHER" id="PTHR46499:SF1">
    <property type="entry name" value="QUEUINE TRNA-RIBOSYLTRANSFERASE"/>
    <property type="match status" value="1"/>
</dbReference>
<dbReference type="Pfam" id="PF01702">
    <property type="entry name" value="TGT"/>
    <property type="match status" value="1"/>
</dbReference>
<dbReference type="SUPFAM" id="SSF51713">
    <property type="entry name" value="tRNA-guanine transglycosylase"/>
    <property type="match status" value="1"/>
</dbReference>
<protein>
    <recommendedName>
        <fullName evidence="1">Queuine tRNA-ribosyltransferase</fullName>
        <ecNumber evidence="1">2.4.2.29</ecNumber>
    </recommendedName>
    <alternativeName>
        <fullName evidence="1">Guanine insertion enzyme</fullName>
    </alternativeName>
    <alternativeName>
        <fullName evidence="1">tRNA-guanine transglycosylase</fullName>
    </alternativeName>
</protein>
<keyword id="KW-0328">Glycosyltransferase</keyword>
<keyword id="KW-0479">Metal-binding</keyword>
<keyword id="KW-0671">Queuosine biosynthesis</keyword>
<keyword id="KW-1185">Reference proteome</keyword>
<keyword id="KW-0808">Transferase</keyword>
<keyword id="KW-0819">tRNA processing</keyword>
<keyword id="KW-0862">Zinc</keyword>
<comment type="function">
    <text evidence="1">Catalyzes the base-exchange of a guanine (G) residue with the queuine precursor 7-aminomethyl-7-deazaguanine (PreQ1) at position 34 (anticodon wobble position) in tRNAs with GU(N) anticodons (tRNA-Asp, -Asn, -His and -Tyr). Catalysis occurs through a double-displacement mechanism. The nucleophile active site attacks the C1' of nucleotide 34 to detach the guanine base from the RNA, forming a covalent enzyme-RNA intermediate. The proton acceptor active site deprotonates the incoming PreQ1, allowing a nucleophilic attack on the C1' of the ribose to form the product. After dissociation, two additional enzymatic reactions on the tRNA convert PreQ1 to queuine (Q), resulting in the hypermodified nucleoside queuosine (7-(((4,5-cis-dihydroxy-2-cyclopenten-1-yl)amino)methyl)-7-deazaguanosine).</text>
</comment>
<comment type="catalytic activity">
    <reaction evidence="1">
        <text>7-aminomethyl-7-carbaguanine + guanosine(34) in tRNA = 7-aminomethyl-7-carbaguanosine(34) in tRNA + guanine</text>
        <dbReference type="Rhea" id="RHEA:24104"/>
        <dbReference type="Rhea" id="RHEA-COMP:10341"/>
        <dbReference type="Rhea" id="RHEA-COMP:10342"/>
        <dbReference type="ChEBI" id="CHEBI:16235"/>
        <dbReference type="ChEBI" id="CHEBI:58703"/>
        <dbReference type="ChEBI" id="CHEBI:74269"/>
        <dbReference type="ChEBI" id="CHEBI:82833"/>
        <dbReference type="EC" id="2.4.2.29"/>
    </reaction>
</comment>
<comment type="cofactor">
    <cofactor evidence="1">
        <name>Zn(2+)</name>
        <dbReference type="ChEBI" id="CHEBI:29105"/>
    </cofactor>
    <text evidence="1">Binds 1 zinc ion per subunit.</text>
</comment>
<comment type="pathway">
    <text evidence="1">tRNA modification; tRNA-queuosine biosynthesis.</text>
</comment>
<comment type="subunit">
    <text evidence="1">Homodimer. Within each dimer, one monomer is responsible for RNA recognition and catalysis, while the other monomer binds to the replacement base PreQ1.</text>
</comment>
<comment type="similarity">
    <text evidence="1">Belongs to the queuine tRNA-ribosyltransferase family.</text>
</comment>
<evidence type="ECO:0000255" key="1">
    <source>
        <dbReference type="HAMAP-Rule" id="MF_00168"/>
    </source>
</evidence>
<organism>
    <name type="scientific">Bacillus licheniformis (strain ATCC 14580 / DSM 13 / JCM 2505 / CCUG 7422 / NBRC 12200 / NCIMB 9375 / NCTC 10341 / NRRL NRS-1264 / Gibson 46)</name>
    <dbReference type="NCBI Taxonomy" id="279010"/>
    <lineage>
        <taxon>Bacteria</taxon>
        <taxon>Bacillati</taxon>
        <taxon>Bacillota</taxon>
        <taxon>Bacilli</taxon>
        <taxon>Bacillales</taxon>
        <taxon>Bacillaceae</taxon>
        <taxon>Bacillus</taxon>
    </lineage>
</organism>
<accession>Q65GP9</accession>
<accession>Q62S58</accession>
<gene>
    <name evidence="1" type="primary">tgt</name>
    <name type="ordered locus">BLi02897</name>
    <name type="ordered locus">BL01140</name>
</gene>
<feature type="chain" id="PRO_0000135450" description="Queuine tRNA-ribosyltransferase">
    <location>
        <begin position="1"/>
        <end position="381"/>
    </location>
</feature>
<feature type="region of interest" description="RNA binding" evidence="1">
    <location>
        <begin position="251"/>
        <end position="257"/>
    </location>
</feature>
<feature type="region of interest" description="RNA binding; important for wobble base 34 recognition" evidence="1">
    <location>
        <begin position="275"/>
        <end position="279"/>
    </location>
</feature>
<feature type="active site" description="Proton acceptor" evidence="1">
    <location>
        <position position="96"/>
    </location>
</feature>
<feature type="active site" description="Nucleophile" evidence="1">
    <location>
        <position position="270"/>
    </location>
</feature>
<feature type="binding site" evidence="1">
    <location>
        <begin position="96"/>
        <end position="100"/>
    </location>
    <ligand>
        <name>substrate</name>
    </ligand>
</feature>
<feature type="binding site" evidence="1">
    <location>
        <position position="150"/>
    </location>
    <ligand>
        <name>substrate</name>
    </ligand>
</feature>
<feature type="binding site" evidence="1">
    <location>
        <position position="193"/>
    </location>
    <ligand>
        <name>substrate</name>
    </ligand>
</feature>
<feature type="binding site" evidence="1">
    <location>
        <position position="220"/>
    </location>
    <ligand>
        <name>substrate</name>
    </ligand>
</feature>
<feature type="binding site" evidence="1">
    <location>
        <position position="308"/>
    </location>
    <ligand>
        <name>Zn(2+)</name>
        <dbReference type="ChEBI" id="CHEBI:29105"/>
    </ligand>
</feature>
<feature type="binding site" evidence="1">
    <location>
        <position position="310"/>
    </location>
    <ligand>
        <name>Zn(2+)</name>
        <dbReference type="ChEBI" id="CHEBI:29105"/>
    </ligand>
</feature>
<feature type="binding site" evidence="1">
    <location>
        <position position="313"/>
    </location>
    <ligand>
        <name>Zn(2+)</name>
        <dbReference type="ChEBI" id="CHEBI:29105"/>
    </ligand>
</feature>
<feature type="binding site" evidence="1">
    <location>
        <position position="339"/>
    </location>
    <ligand>
        <name>Zn(2+)</name>
        <dbReference type="ChEBI" id="CHEBI:29105"/>
    </ligand>
</feature>
<sequence length="381" mass="43615">MSQQPIRYEFIKACKQTGARLGRVHTPHGSFETPVFMPVGTLATVKTMSPEELKEMGADIILSNTYHLWLRPGHDIVKEAGGLHQFMNWNRAILTDSGGFQVFSLSEFRKIEEEGVHFRNHLNGDKLFLSPEKAMEIQNALGSDIMMAFDECPPYPAEYDYMKKSVERTSRWAERCLKAHNRPDEQGLFGIVQGGEYENLRKQSAKDLISLDFPGYAIGGLSVGEPKDVMNRVLEFTTPLLPADKPRYLMGVGSPDSLIDGAIRGVDMFDCVLPTRIARNGTLMTSEGRLVVKNAKYERDFRPIDEQCDCYTCRNYSRAYIRHLIRCNETFGIRLTSYHNLYFLLKLMGQVRDAIREDRLGDFREEFFERYGFNKPNAKSF</sequence>
<name>TGT_BACLD</name>
<reference key="1">
    <citation type="journal article" date="2004" name="J. Mol. Microbiol. Biotechnol.">
        <title>The complete genome sequence of Bacillus licheniformis DSM13, an organism with great industrial potential.</title>
        <authorList>
            <person name="Veith B."/>
            <person name="Herzberg C."/>
            <person name="Steckel S."/>
            <person name="Feesche J."/>
            <person name="Maurer K.H."/>
            <person name="Ehrenreich P."/>
            <person name="Baeumer S."/>
            <person name="Henne A."/>
            <person name="Liesegang H."/>
            <person name="Merkl R."/>
            <person name="Ehrenreich A."/>
            <person name="Gottschalk G."/>
        </authorList>
    </citation>
    <scope>NUCLEOTIDE SEQUENCE [LARGE SCALE GENOMIC DNA]</scope>
    <source>
        <strain>ATCC 14580 / DSM 13 / JCM 2505 / CCUG 7422 / NBRC 12200 / NCIMB 9375 / NCTC 10341 / NRRL NRS-1264 / Gibson 46</strain>
    </source>
</reference>
<reference key="2">
    <citation type="journal article" date="2004" name="Genome Biol.">
        <title>Complete genome sequence of the industrial bacterium Bacillus licheniformis and comparisons with closely related Bacillus species.</title>
        <authorList>
            <person name="Rey M.W."/>
            <person name="Ramaiya P."/>
            <person name="Nelson B.A."/>
            <person name="Brody-Karpin S.D."/>
            <person name="Zaretsky E.J."/>
            <person name="Tang M."/>
            <person name="Lopez de Leon A."/>
            <person name="Xiang H."/>
            <person name="Gusti V."/>
            <person name="Clausen I.G."/>
            <person name="Olsen P.B."/>
            <person name="Rasmussen M.D."/>
            <person name="Andersen J.T."/>
            <person name="Joergensen P.L."/>
            <person name="Larsen T.S."/>
            <person name="Sorokin A."/>
            <person name="Bolotin A."/>
            <person name="Lapidus A."/>
            <person name="Galleron N."/>
            <person name="Ehrlich S.D."/>
            <person name="Berka R.M."/>
        </authorList>
    </citation>
    <scope>NUCLEOTIDE SEQUENCE [LARGE SCALE GENOMIC DNA]</scope>
    <source>
        <strain>ATCC 14580 / DSM 13 / JCM 2505 / CCUG 7422 / NBRC 12200 / NCIMB 9375 / NCTC 10341 / NRRL NRS-1264 / Gibson 46</strain>
    </source>
</reference>
<proteinExistence type="inferred from homology"/>